<reference key="1">
    <citation type="journal article" date="2005" name="Proc. Natl. Acad. Sci. U.S.A.">
        <title>Whole genome sequence of Staphylococcus saprophyticus reveals the pathogenesis of uncomplicated urinary tract infection.</title>
        <authorList>
            <person name="Kuroda M."/>
            <person name="Yamashita A."/>
            <person name="Hirakawa H."/>
            <person name="Kumano M."/>
            <person name="Morikawa K."/>
            <person name="Higashide M."/>
            <person name="Maruyama A."/>
            <person name="Inose Y."/>
            <person name="Matoba K."/>
            <person name="Toh H."/>
            <person name="Kuhara S."/>
            <person name="Hattori M."/>
            <person name="Ohta T."/>
        </authorList>
    </citation>
    <scope>NUCLEOTIDE SEQUENCE [LARGE SCALE GENOMIC DNA]</scope>
    <source>
        <strain>ATCC 15305 / DSM 20229 / NCIMB 8711 / NCTC 7292 / S-41</strain>
    </source>
</reference>
<organism>
    <name type="scientific">Staphylococcus saprophyticus subsp. saprophyticus (strain ATCC 15305 / DSM 20229 / NCIMB 8711 / NCTC 7292 / S-41)</name>
    <dbReference type="NCBI Taxonomy" id="342451"/>
    <lineage>
        <taxon>Bacteria</taxon>
        <taxon>Bacillati</taxon>
        <taxon>Bacillota</taxon>
        <taxon>Bacilli</taxon>
        <taxon>Bacillales</taxon>
        <taxon>Staphylococcaceae</taxon>
        <taxon>Staphylococcus</taxon>
    </lineage>
</organism>
<keyword id="KW-0067">ATP-binding</keyword>
<keyword id="KW-0131">Cell cycle</keyword>
<keyword id="KW-0132">Cell division</keyword>
<keyword id="KW-0133">Cell shape</keyword>
<keyword id="KW-0961">Cell wall biogenesis/degradation</keyword>
<keyword id="KW-0963">Cytoplasm</keyword>
<keyword id="KW-0436">Ligase</keyword>
<keyword id="KW-0547">Nucleotide-binding</keyword>
<keyword id="KW-0573">Peptidoglycan synthesis</keyword>
<keyword id="KW-1185">Reference proteome</keyword>
<comment type="function">
    <text evidence="1">Cell wall formation.</text>
</comment>
<comment type="catalytic activity">
    <reaction evidence="1">
        <text>UDP-N-acetyl-alpha-D-muramate + L-alanine + ATP = UDP-N-acetyl-alpha-D-muramoyl-L-alanine + ADP + phosphate + H(+)</text>
        <dbReference type="Rhea" id="RHEA:23372"/>
        <dbReference type="ChEBI" id="CHEBI:15378"/>
        <dbReference type="ChEBI" id="CHEBI:30616"/>
        <dbReference type="ChEBI" id="CHEBI:43474"/>
        <dbReference type="ChEBI" id="CHEBI:57972"/>
        <dbReference type="ChEBI" id="CHEBI:70757"/>
        <dbReference type="ChEBI" id="CHEBI:83898"/>
        <dbReference type="ChEBI" id="CHEBI:456216"/>
        <dbReference type="EC" id="6.3.2.8"/>
    </reaction>
</comment>
<comment type="pathway">
    <text evidence="1">Cell wall biogenesis; peptidoglycan biosynthesis.</text>
</comment>
<comment type="subcellular location">
    <subcellularLocation>
        <location evidence="1">Cytoplasm</location>
    </subcellularLocation>
</comment>
<comment type="similarity">
    <text evidence="1">Belongs to the MurCDEF family.</text>
</comment>
<name>MURC_STAS1</name>
<sequence>MTHYHFVGIKGAGMSSLAQIMHDLGNEVQGSDIKNYVFTEVALKNNGIKILPFDANNIQSDMVVVQGNAFPDTHEEVVKAHELKLEVIRYHDFLGHIINQYTSVAVTGAHGKTSTTGLLSHVMNGDKKTSFLIGDGTGLGIPASDYFAFEACEYRRHFLSYHPDYAIMTNIDFDHPDYFKDVDDVFNAFQEMAHNVKKAIIAWGDDTHLRKIEADVPVYYYGFSNKDDVYADNLEISEKGTKFDVYFKGEYFDTFLSPQFGDHNILNALSVITISYLESLNIDNIKEALETFGGVKRRFNETKVGNQVLVDDYAHHPREISATIETARKKYPNKDVIAVFQPHTFSRTQAFLGEFAECLSLADKTFLCEIFGSIRENSGNLTIQDLVQRIDGATLIDEESVNALEQYSDAVILFMGAGDIQKIQRAYMEKIGVTSPF</sequence>
<proteinExistence type="inferred from homology"/>
<feature type="chain" id="PRO_0000242600" description="UDP-N-acetylmuramate--L-alanine ligase">
    <location>
        <begin position="1"/>
        <end position="437"/>
    </location>
</feature>
<feature type="binding site" evidence="1">
    <location>
        <begin position="108"/>
        <end position="114"/>
    </location>
    <ligand>
        <name>ATP</name>
        <dbReference type="ChEBI" id="CHEBI:30616"/>
    </ligand>
</feature>
<protein>
    <recommendedName>
        <fullName evidence="1">UDP-N-acetylmuramate--L-alanine ligase</fullName>
        <ecNumber evidence="1">6.3.2.8</ecNumber>
    </recommendedName>
    <alternativeName>
        <fullName evidence="1">UDP-N-acetylmuramoyl-L-alanine synthetase</fullName>
    </alternativeName>
</protein>
<evidence type="ECO:0000255" key="1">
    <source>
        <dbReference type="HAMAP-Rule" id="MF_00046"/>
    </source>
</evidence>
<dbReference type="EC" id="6.3.2.8" evidence="1"/>
<dbReference type="EMBL" id="AP008934">
    <property type="protein sequence ID" value="BAE18168.1"/>
    <property type="molecule type" value="Genomic_DNA"/>
</dbReference>
<dbReference type="RefSeq" id="WP_011302870.1">
    <property type="nucleotide sequence ID" value="NZ_MTGA01000033.1"/>
</dbReference>
<dbReference type="SMR" id="Q49YH1"/>
<dbReference type="GeneID" id="3615717"/>
<dbReference type="KEGG" id="ssp:SSP1023"/>
<dbReference type="PATRIC" id="fig|342451.11.peg.1022"/>
<dbReference type="eggNOG" id="COG0773">
    <property type="taxonomic scope" value="Bacteria"/>
</dbReference>
<dbReference type="HOGENOM" id="CLU_028104_1_0_9"/>
<dbReference type="OrthoDB" id="9804126at2"/>
<dbReference type="UniPathway" id="UPA00219"/>
<dbReference type="Proteomes" id="UP000006371">
    <property type="component" value="Chromosome"/>
</dbReference>
<dbReference type="GO" id="GO:0005737">
    <property type="term" value="C:cytoplasm"/>
    <property type="evidence" value="ECO:0007669"/>
    <property type="project" value="UniProtKB-SubCell"/>
</dbReference>
<dbReference type="GO" id="GO:0005524">
    <property type="term" value="F:ATP binding"/>
    <property type="evidence" value="ECO:0007669"/>
    <property type="project" value="UniProtKB-UniRule"/>
</dbReference>
<dbReference type="GO" id="GO:0008763">
    <property type="term" value="F:UDP-N-acetylmuramate-L-alanine ligase activity"/>
    <property type="evidence" value="ECO:0007669"/>
    <property type="project" value="UniProtKB-UniRule"/>
</dbReference>
<dbReference type="GO" id="GO:0051301">
    <property type="term" value="P:cell division"/>
    <property type="evidence" value="ECO:0007669"/>
    <property type="project" value="UniProtKB-KW"/>
</dbReference>
<dbReference type="GO" id="GO:0071555">
    <property type="term" value="P:cell wall organization"/>
    <property type="evidence" value="ECO:0007669"/>
    <property type="project" value="UniProtKB-KW"/>
</dbReference>
<dbReference type="GO" id="GO:0009252">
    <property type="term" value="P:peptidoglycan biosynthetic process"/>
    <property type="evidence" value="ECO:0007669"/>
    <property type="project" value="UniProtKB-UniRule"/>
</dbReference>
<dbReference type="GO" id="GO:0008360">
    <property type="term" value="P:regulation of cell shape"/>
    <property type="evidence" value="ECO:0007669"/>
    <property type="project" value="UniProtKB-KW"/>
</dbReference>
<dbReference type="Gene3D" id="3.90.190.20">
    <property type="entry name" value="Mur ligase, C-terminal domain"/>
    <property type="match status" value="1"/>
</dbReference>
<dbReference type="Gene3D" id="3.40.1190.10">
    <property type="entry name" value="Mur-like, catalytic domain"/>
    <property type="match status" value="1"/>
</dbReference>
<dbReference type="Gene3D" id="3.40.50.720">
    <property type="entry name" value="NAD(P)-binding Rossmann-like Domain"/>
    <property type="match status" value="1"/>
</dbReference>
<dbReference type="HAMAP" id="MF_00046">
    <property type="entry name" value="MurC"/>
    <property type="match status" value="1"/>
</dbReference>
<dbReference type="InterPro" id="IPR036565">
    <property type="entry name" value="Mur-like_cat_sf"/>
</dbReference>
<dbReference type="InterPro" id="IPR004101">
    <property type="entry name" value="Mur_ligase_C"/>
</dbReference>
<dbReference type="InterPro" id="IPR036615">
    <property type="entry name" value="Mur_ligase_C_dom_sf"/>
</dbReference>
<dbReference type="InterPro" id="IPR013221">
    <property type="entry name" value="Mur_ligase_cen"/>
</dbReference>
<dbReference type="InterPro" id="IPR000713">
    <property type="entry name" value="Mur_ligase_N"/>
</dbReference>
<dbReference type="InterPro" id="IPR050061">
    <property type="entry name" value="MurCDEF_pg_biosynth"/>
</dbReference>
<dbReference type="InterPro" id="IPR005758">
    <property type="entry name" value="UDP-N-AcMur_Ala_ligase_MurC"/>
</dbReference>
<dbReference type="NCBIfam" id="TIGR01082">
    <property type="entry name" value="murC"/>
    <property type="match status" value="1"/>
</dbReference>
<dbReference type="PANTHER" id="PTHR43445:SF3">
    <property type="entry name" value="UDP-N-ACETYLMURAMATE--L-ALANINE LIGASE"/>
    <property type="match status" value="1"/>
</dbReference>
<dbReference type="PANTHER" id="PTHR43445">
    <property type="entry name" value="UDP-N-ACETYLMURAMATE--L-ALANINE LIGASE-RELATED"/>
    <property type="match status" value="1"/>
</dbReference>
<dbReference type="Pfam" id="PF01225">
    <property type="entry name" value="Mur_ligase"/>
    <property type="match status" value="1"/>
</dbReference>
<dbReference type="Pfam" id="PF02875">
    <property type="entry name" value="Mur_ligase_C"/>
    <property type="match status" value="1"/>
</dbReference>
<dbReference type="Pfam" id="PF08245">
    <property type="entry name" value="Mur_ligase_M"/>
    <property type="match status" value="1"/>
</dbReference>
<dbReference type="SUPFAM" id="SSF51984">
    <property type="entry name" value="MurCD N-terminal domain"/>
    <property type="match status" value="1"/>
</dbReference>
<dbReference type="SUPFAM" id="SSF53623">
    <property type="entry name" value="MurD-like peptide ligases, catalytic domain"/>
    <property type="match status" value="1"/>
</dbReference>
<dbReference type="SUPFAM" id="SSF53244">
    <property type="entry name" value="MurD-like peptide ligases, peptide-binding domain"/>
    <property type="match status" value="1"/>
</dbReference>
<accession>Q49YH1</accession>
<gene>
    <name evidence="1" type="primary">murC</name>
    <name type="ordered locus">SSP1023</name>
</gene>